<name>TTCA_ECO5E</name>
<sequence length="311" mass="35460">MSQNQEISKKEQYNLNKLQKRLRRNVGEAIADFNMIEEGDRIMVCLSGGKDSYTMLEILRNLQQSAPINFSLVAVNLDQKQPGFPEHVLPEYLEKLGVEYKIVEENTYGIVKEKIPEGKTTCSLCSRLRRGILYRTATELGATKIALGHHRDDILQTLFLNMFYGGKMKGMPPKLMSDDGKHIVIRPLAYCREKDIQRFADAKAFPIIPCNLCGSQPNLQRQVIADMLRDWDKRYPGRIETMFSAMQNVVPSHLCDTNLFDFKGITHGSEVVNGGDLAFDREEIPLQPAGWQPEEDENQLDELRLNVVEVK</sequence>
<proteinExistence type="inferred from homology"/>
<protein>
    <recommendedName>
        <fullName evidence="1">tRNA-cytidine(32) 2-sulfurtransferase</fullName>
        <ecNumber evidence="1">2.8.1.-</ecNumber>
    </recommendedName>
    <alternativeName>
        <fullName evidence="1">Two-thiocytidine biosynthesis protein A</fullName>
    </alternativeName>
    <alternativeName>
        <fullName evidence="1">tRNA 2-thiocytidine biosynthesis protein TtcA</fullName>
    </alternativeName>
</protein>
<dbReference type="EC" id="2.8.1.-" evidence="1"/>
<dbReference type="EMBL" id="CP001164">
    <property type="protein sequence ID" value="ACI37471.1"/>
    <property type="molecule type" value="Genomic_DNA"/>
</dbReference>
<dbReference type="RefSeq" id="WP_000081418.1">
    <property type="nucleotide sequence ID" value="NC_011353.1"/>
</dbReference>
<dbReference type="SMR" id="B5Z0R4"/>
<dbReference type="GeneID" id="75171471"/>
<dbReference type="KEGG" id="ecf:ECH74115_1993"/>
<dbReference type="HOGENOM" id="CLU_026481_0_0_6"/>
<dbReference type="GO" id="GO:0005737">
    <property type="term" value="C:cytoplasm"/>
    <property type="evidence" value="ECO:0007669"/>
    <property type="project" value="UniProtKB-SubCell"/>
</dbReference>
<dbReference type="GO" id="GO:0051539">
    <property type="term" value="F:4 iron, 4 sulfur cluster binding"/>
    <property type="evidence" value="ECO:0007669"/>
    <property type="project" value="UniProtKB-UniRule"/>
</dbReference>
<dbReference type="GO" id="GO:0005524">
    <property type="term" value="F:ATP binding"/>
    <property type="evidence" value="ECO:0007669"/>
    <property type="project" value="UniProtKB-UniRule"/>
</dbReference>
<dbReference type="GO" id="GO:0000287">
    <property type="term" value="F:magnesium ion binding"/>
    <property type="evidence" value="ECO:0007669"/>
    <property type="project" value="UniProtKB-UniRule"/>
</dbReference>
<dbReference type="GO" id="GO:0016783">
    <property type="term" value="F:sulfurtransferase activity"/>
    <property type="evidence" value="ECO:0007669"/>
    <property type="project" value="UniProtKB-UniRule"/>
</dbReference>
<dbReference type="GO" id="GO:0000049">
    <property type="term" value="F:tRNA binding"/>
    <property type="evidence" value="ECO:0007669"/>
    <property type="project" value="UniProtKB-KW"/>
</dbReference>
<dbReference type="GO" id="GO:0034227">
    <property type="term" value="P:tRNA thio-modification"/>
    <property type="evidence" value="ECO:0007669"/>
    <property type="project" value="UniProtKB-UniRule"/>
</dbReference>
<dbReference type="CDD" id="cd24138">
    <property type="entry name" value="TtcA-like"/>
    <property type="match status" value="1"/>
</dbReference>
<dbReference type="FunFam" id="3.40.50.620:FF:000046">
    <property type="entry name" value="tRNA-cytidine(32) 2-sulfurtransferase"/>
    <property type="match status" value="1"/>
</dbReference>
<dbReference type="Gene3D" id="3.40.50.620">
    <property type="entry name" value="HUPs"/>
    <property type="match status" value="1"/>
</dbReference>
<dbReference type="HAMAP" id="MF_01850">
    <property type="entry name" value="TtcA"/>
    <property type="match status" value="1"/>
</dbReference>
<dbReference type="InterPro" id="IPR014729">
    <property type="entry name" value="Rossmann-like_a/b/a_fold"/>
</dbReference>
<dbReference type="InterPro" id="IPR011063">
    <property type="entry name" value="TilS/TtcA_N"/>
</dbReference>
<dbReference type="InterPro" id="IPR012089">
    <property type="entry name" value="tRNA_Cyd_32_2_STrfase"/>
</dbReference>
<dbReference type="InterPro" id="IPR035107">
    <property type="entry name" value="tRNA_thiolation_TtcA_Ctu1"/>
</dbReference>
<dbReference type="NCBIfam" id="NF007972">
    <property type="entry name" value="PRK10696.1"/>
    <property type="match status" value="1"/>
</dbReference>
<dbReference type="PANTHER" id="PTHR43686:SF1">
    <property type="entry name" value="AMINOTRAN_5 DOMAIN-CONTAINING PROTEIN"/>
    <property type="match status" value="1"/>
</dbReference>
<dbReference type="PANTHER" id="PTHR43686">
    <property type="entry name" value="SULFURTRANSFERASE-RELATED"/>
    <property type="match status" value="1"/>
</dbReference>
<dbReference type="Pfam" id="PF01171">
    <property type="entry name" value="ATP_bind_3"/>
    <property type="match status" value="1"/>
</dbReference>
<dbReference type="PIRSF" id="PIRSF004976">
    <property type="entry name" value="ATPase_YdaO"/>
    <property type="match status" value="1"/>
</dbReference>
<dbReference type="SUPFAM" id="SSF52402">
    <property type="entry name" value="Adenine nucleotide alpha hydrolases-like"/>
    <property type="match status" value="1"/>
</dbReference>
<feature type="chain" id="PRO_1000188636" description="tRNA-cytidine(32) 2-sulfurtransferase">
    <location>
        <begin position="1"/>
        <end position="311"/>
    </location>
</feature>
<feature type="short sequence motif" description="PP-loop motif" evidence="1">
    <location>
        <begin position="47"/>
        <end position="52"/>
    </location>
</feature>
<feature type="binding site" evidence="1">
    <location>
        <position position="122"/>
    </location>
    <ligand>
        <name>[4Fe-4S] cluster</name>
        <dbReference type="ChEBI" id="CHEBI:49883"/>
    </ligand>
</feature>
<feature type="binding site" evidence="1">
    <location>
        <position position="125"/>
    </location>
    <ligand>
        <name>[4Fe-4S] cluster</name>
        <dbReference type="ChEBI" id="CHEBI:49883"/>
    </ligand>
</feature>
<feature type="binding site" evidence="1">
    <location>
        <position position="213"/>
    </location>
    <ligand>
        <name>[4Fe-4S] cluster</name>
        <dbReference type="ChEBI" id="CHEBI:49883"/>
    </ligand>
</feature>
<accession>B5Z0R4</accession>
<reference key="1">
    <citation type="journal article" date="2011" name="Proc. Natl. Acad. Sci. U.S.A.">
        <title>Genomic anatomy of Escherichia coli O157:H7 outbreaks.</title>
        <authorList>
            <person name="Eppinger M."/>
            <person name="Mammel M.K."/>
            <person name="Leclerc J.E."/>
            <person name="Ravel J."/>
            <person name="Cebula T.A."/>
        </authorList>
    </citation>
    <scope>NUCLEOTIDE SEQUENCE [LARGE SCALE GENOMIC DNA]</scope>
    <source>
        <strain>EC4115 / EHEC</strain>
    </source>
</reference>
<organism>
    <name type="scientific">Escherichia coli O157:H7 (strain EC4115 / EHEC)</name>
    <dbReference type="NCBI Taxonomy" id="444450"/>
    <lineage>
        <taxon>Bacteria</taxon>
        <taxon>Pseudomonadati</taxon>
        <taxon>Pseudomonadota</taxon>
        <taxon>Gammaproteobacteria</taxon>
        <taxon>Enterobacterales</taxon>
        <taxon>Enterobacteriaceae</taxon>
        <taxon>Escherichia</taxon>
    </lineage>
</organism>
<keyword id="KW-0004">4Fe-4S</keyword>
<keyword id="KW-0067">ATP-binding</keyword>
<keyword id="KW-0963">Cytoplasm</keyword>
<keyword id="KW-0408">Iron</keyword>
<keyword id="KW-0411">Iron-sulfur</keyword>
<keyword id="KW-0460">Magnesium</keyword>
<keyword id="KW-0479">Metal-binding</keyword>
<keyword id="KW-0547">Nucleotide-binding</keyword>
<keyword id="KW-0694">RNA-binding</keyword>
<keyword id="KW-0808">Transferase</keyword>
<keyword id="KW-0819">tRNA processing</keyword>
<keyword id="KW-0820">tRNA-binding</keyword>
<evidence type="ECO:0000255" key="1">
    <source>
        <dbReference type="HAMAP-Rule" id="MF_01850"/>
    </source>
</evidence>
<gene>
    <name evidence="1" type="primary">ttcA</name>
    <name type="ordered locus">ECH74115_1993</name>
</gene>
<comment type="function">
    <text evidence="1">Catalyzes the ATP-dependent 2-thiolation of cytidine in position 32 of tRNA, to form 2-thiocytidine (s(2)C32). The sulfur atoms are provided by the cysteine/cysteine desulfurase (IscS) system.</text>
</comment>
<comment type="catalytic activity">
    <reaction evidence="1">
        <text>cytidine(32) in tRNA + S-sulfanyl-L-cysteinyl-[cysteine desulfurase] + AH2 + ATP = 2-thiocytidine(32) in tRNA + L-cysteinyl-[cysteine desulfurase] + A + AMP + diphosphate + H(+)</text>
        <dbReference type="Rhea" id="RHEA:57048"/>
        <dbReference type="Rhea" id="RHEA-COMP:10288"/>
        <dbReference type="Rhea" id="RHEA-COMP:12157"/>
        <dbReference type="Rhea" id="RHEA-COMP:12158"/>
        <dbReference type="Rhea" id="RHEA-COMP:14821"/>
        <dbReference type="ChEBI" id="CHEBI:13193"/>
        <dbReference type="ChEBI" id="CHEBI:15378"/>
        <dbReference type="ChEBI" id="CHEBI:17499"/>
        <dbReference type="ChEBI" id="CHEBI:29950"/>
        <dbReference type="ChEBI" id="CHEBI:30616"/>
        <dbReference type="ChEBI" id="CHEBI:33019"/>
        <dbReference type="ChEBI" id="CHEBI:61963"/>
        <dbReference type="ChEBI" id="CHEBI:82748"/>
        <dbReference type="ChEBI" id="CHEBI:141453"/>
        <dbReference type="ChEBI" id="CHEBI:456215"/>
    </reaction>
    <physiologicalReaction direction="left-to-right" evidence="1">
        <dbReference type="Rhea" id="RHEA:57049"/>
    </physiologicalReaction>
</comment>
<comment type="cofactor">
    <cofactor evidence="1">
        <name>Mg(2+)</name>
        <dbReference type="ChEBI" id="CHEBI:18420"/>
    </cofactor>
</comment>
<comment type="cofactor">
    <cofactor evidence="1">
        <name>[4Fe-4S] cluster</name>
        <dbReference type="ChEBI" id="CHEBI:49883"/>
    </cofactor>
    <text evidence="1">Binds 1 [4Fe-4S] cluster per subunit. The cluster is chelated by three Cys residues, the fourth Fe has a free coordination site that may bind a sulfur atom transferred from the persulfide of IscS.</text>
</comment>
<comment type="pathway">
    <text evidence="1">tRNA modification.</text>
</comment>
<comment type="subunit">
    <text evidence="1">Homodimer.</text>
</comment>
<comment type="subcellular location">
    <subcellularLocation>
        <location evidence="1">Cytoplasm</location>
    </subcellularLocation>
</comment>
<comment type="miscellaneous">
    <text evidence="1">The thiolation reaction likely consists of two steps: a first activation step by ATP to form an adenylated intermediate of the target base of tRNA, and a second nucleophilic substitution step of the sulfur (S) atom supplied by the hydrosulfide attached to the Fe-S cluster.</text>
</comment>
<comment type="similarity">
    <text evidence="1">Belongs to the TtcA family.</text>
</comment>